<name>NUOA_CROS8</name>
<reference key="1">
    <citation type="journal article" date="2010" name="PLoS ONE">
        <title>Genome sequence of Cronobacter sakazakii BAA-894 and comparative genomic hybridization analysis with other Cronobacter species.</title>
        <authorList>
            <person name="Kucerova E."/>
            <person name="Clifton S.W."/>
            <person name="Xia X.Q."/>
            <person name="Long F."/>
            <person name="Porwollik S."/>
            <person name="Fulton L."/>
            <person name="Fronick C."/>
            <person name="Minx P."/>
            <person name="Kyung K."/>
            <person name="Warren W."/>
            <person name="Fulton R."/>
            <person name="Feng D."/>
            <person name="Wollam A."/>
            <person name="Shah N."/>
            <person name="Bhonagiri V."/>
            <person name="Nash W.E."/>
            <person name="Hallsworth-Pepin K."/>
            <person name="Wilson R.K."/>
            <person name="McClelland M."/>
            <person name="Forsythe S.J."/>
        </authorList>
    </citation>
    <scope>NUCLEOTIDE SEQUENCE [LARGE SCALE GENOMIC DNA]</scope>
    <source>
        <strain>ATCC BAA-894</strain>
    </source>
</reference>
<protein>
    <recommendedName>
        <fullName evidence="1">NADH-quinone oxidoreductase subunit A</fullName>
        <ecNumber evidence="1">7.1.1.-</ecNumber>
    </recommendedName>
    <alternativeName>
        <fullName evidence="1">NADH dehydrogenase I subunit A</fullName>
    </alternativeName>
    <alternativeName>
        <fullName evidence="1">NDH-1 subunit A</fullName>
    </alternativeName>
    <alternativeName>
        <fullName evidence="1">NUO1</fullName>
    </alternativeName>
</protein>
<sequence>MSMSTSTEVIAHHWAFGIFLIVAIGLCCLMLVGAWFLGGRARARYKNTPFESGIDSVGTARLRLSAKFYLVAMFFVIFDVEALYLFAWSTSVREVGWLGFIEAAIFILVLLAGLVYLVRIGALEWTPSRSRRERLNTEEAGSLTNRHTQ</sequence>
<feature type="chain" id="PRO_0000362674" description="NADH-quinone oxidoreductase subunit A">
    <location>
        <begin position="1"/>
        <end position="149"/>
    </location>
</feature>
<feature type="transmembrane region" description="Helical" evidence="1">
    <location>
        <begin position="16"/>
        <end position="36"/>
    </location>
</feature>
<feature type="transmembrane region" description="Helical" evidence="1">
    <location>
        <begin position="68"/>
        <end position="88"/>
    </location>
</feature>
<feature type="transmembrane region" description="Helical" evidence="1">
    <location>
        <begin position="98"/>
        <end position="118"/>
    </location>
</feature>
<keyword id="KW-0997">Cell inner membrane</keyword>
<keyword id="KW-1003">Cell membrane</keyword>
<keyword id="KW-0472">Membrane</keyword>
<keyword id="KW-0520">NAD</keyword>
<keyword id="KW-0874">Quinone</keyword>
<keyword id="KW-1185">Reference proteome</keyword>
<keyword id="KW-1278">Translocase</keyword>
<keyword id="KW-0812">Transmembrane</keyword>
<keyword id="KW-1133">Transmembrane helix</keyword>
<keyword id="KW-0813">Transport</keyword>
<keyword id="KW-0830">Ubiquinone</keyword>
<dbReference type="EC" id="7.1.1.-" evidence="1"/>
<dbReference type="EMBL" id="CP000783">
    <property type="protein sequence ID" value="ABU76202.1"/>
    <property type="molecule type" value="Genomic_DNA"/>
</dbReference>
<dbReference type="RefSeq" id="WP_007776781.1">
    <property type="nucleotide sequence ID" value="NC_009778.1"/>
</dbReference>
<dbReference type="SMR" id="A7MH22"/>
<dbReference type="GeneID" id="56729865"/>
<dbReference type="KEGG" id="esa:ESA_00932"/>
<dbReference type="HOGENOM" id="CLU_119549_2_1_6"/>
<dbReference type="Proteomes" id="UP000000260">
    <property type="component" value="Chromosome"/>
</dbReference>
<dbReference type="GO" id="GO:0030964">
    <property type="term" value="C:NADH dehydrogenase complex"/>
    <property type="evidence" value="ECO:0007669"/>
    <property type="project" value="TreeGrafter"/>
</dbReference>
<dbReference type="GO" id="GO:0005886">
    <property type="term" value="C:plasma membrane"/>
    <property type="evidence" value="ECO:0007669"/>
    <property type="project" value="UniProtKB-SubCell"/>
</dbReference>
<dbReference type="GO" id="GO:0008137">
    <property type="term" value="F:NADH dehydrogenase (ubiquinone) activity"/>
    <property type="evidence" value="ECO:0007669"/>
    <property type="project" value="InterPro"/>
</dbReference>
<dbReference type="GO" id="GO:0050136">
    <property type="term" value="F:NADH:ubiquinone reductase (non-electrogenic) activity"/>
    <property type="evidence" value="ECO:0007669"/>
    <property type="project" value="UniProtKB-UniRule"/>
</dbReference>
<dbReference type="GO" id="GO:0048038">
    <property type="term" value="F:quinone binding"/>
    <property type="evidence" value="ECO:0007669"/>
    <property type="project" value="UniProtKB-KW"/>
</dbReference>
<dbReference type="FunFam" id="1.20.58.1610:FF:000003">
    <property type="entry name" value="NADH-quinone oxidoreductase subunit A"/>
    <property type="match status" value="1"/>
</dbReference>
<dbReference type="Gene3D" id="1.20.58.1610">
    <property type="entry name" value="NADH:ubiquinone/plastoquinone oxidoreductase, chain 3"/>
    <property type="match status" value="1"/>
</dbReference>
<dbReference type="HAMAP" id="MF_01394">
    <property type="entry name" value="NDH1_NuoA"/>
    <property type="match status" value="1"/>
</dbReference>
<dbReference type="InterPro" id="IPR023043">
    <property type="entry name" value="NAD(P)H_OxRDtase_bac/plastid"/>
</dbReference>
<dbReference type="InterPro" id="IPR000440">
    <property type="entry name" value="NADH_UbQ/plastoQ_OxRdtase_su3"/>
</dbReference>
<dbReference type="InterPro" id="IPR038430">
    <property type="entry name" value="NDAH_ubi_oxred_su3_sf"/>
</dbReference>
<dbReference type="PANTHER" id="PTHR11058:SF21">
    <property type="entry name" value="NADH-QUINONE OXIDOREDUCTASE SUBUNIT A"/>
    <property type="match status" value="1"/>
</dbReference>
<dbReference type="PANTHER" id="PTHR11058">
    <property type="entry name" value="NADH-UBIQUINONE OXIDOREDUCTASE CHAIN 3"/>
    <property type="match status" value="1"/>
</dbReference>
<dbReference type="Pfam" id="PF00507">
    <property type="entry name" value="Oxidored_q4"/>
    <property type="match status" value="1"/>
</dbReference>
<organism>
    <name type="scientific">Cronobacter sakazakii (strain ATCC BAA-894)</name>
    <name type="common">Enterobacter sakazakii</name>
    <dbReference type="NCBI Taxonomy" id="290339"/>
    <lineage>
        <taxon>Bacteria</taxon>
        <taxon>Pseudomonadati</taxon>
        <taxon>Pseudomonadota</taxon>
        <taxon>Gammaproteobacteria</taxon>
        <taxon>Enterobacterales</taxon>
        <taxon>Enterobacteriaceae</taxon>
        <taxon>Cronobacter</taxon>
    </lineage>
</organism>
<accession>A7MH22</accession>
<comment type="function">
    <text evidence="1">NDH-1 shuttles electrons from NADH, via FMN and iron-sulfur (Fe-S) centers, to quinones in the respiratory chain. The immediate electron acceptor for the enzyme in this species is believed to be ubiquinone. Couples the redox reaction to proton translocation (for every two electrons transferred, four hydrogen ions are translocated across the cytoplasmic membrane), and thus conserves the redox energy in a proton gradient.</text>
</comment>
<comment type="catalytic activity">
    <reaction evidence="1">
        <text>a quinone + NADH + 5 H(+)(in) = a quinol + NAD(+) + 4 H(+)(out)</text>
        <dbReference type="Rhea" id="RHEA:57888"/>
        <dbReference type="ChEBI" id="CHEBI:15378"/>
        <dbReference type="ChEBI" id="CHEBI:24646"/>
        <dbReference type="ChEBI" id="CHEBI:57540"/>
        <dbReference type="ChEBI" id="CHEBI:57945"/>
        <dbReference type="ChEBI" id="CHEBI:132124"/>
    </reaction>
</comment>
<comment type="subunit">
    <text evidence="1">NDH-1 is composed of 13 different subunits. Subunits NuoA, H, J, K, L, M, N constitute the membrane sector of the complex.</text>
</comment>
<comment type="subcellular location">
    <subcellularLocation>
        <location evidence="1">Cell inner membrane</location>
        <topology evidence="1">Multi-pass membrane protein</topology>
    </subcellularLocation>
</comment>
<comment type="similarity">
    <text evidence="1">Belongs to the complex I subunit 3 family.</text>
</comment>
<evidence type="ECO:0000255" key="1">
    <source>
        <dbReference type="HAMAP-Rule" id="MF_01394"/>
    </source>
</evidence>
<proteinExistence type="inferred from homology"/>
<gene>
    <name evidence="1" type="primary">nuoA</name>
    <name type="ordered locus">ESA_00932</name>
</gene>